<sequence length="113" mass="13136">MSESNRKSYTDFNVELLEKEKQKKKLKKPDRYKVILINDDYTPQEFVVYVLAVVFRKSMDESRQIMWRAHTEGSAVCGVYSLDIARTKVAEVHKLADDAGHPLQCQLAKEEEE</sequence>
<evidence type="ECO:0000255" key="1">
    <source>
        <dbReference type="HAMAP-Rule" id="MF_00302"/>
    </source>
</evidence>
<accession>B0S9H9</accession>
<name>CLPS_LEPBA</name>
<organism>
    <name type="scientific">Leptospira biflexa serovar Patoc (strain Patoc 1 / Ames)</name>
    <dbReference type="NCBI Taxonomy" id="355278"/>
    <lineage>
        <taxon>Bacteria</taxon>
        <taxon>Pseudomonadati</taxon>
        <taxon>Spirochaetota</taxon>
        <taxon>Spirochaetia</taxon>
        <taxon>Leptospirales</taxon>
        <taxon>Leptospiraceae</taxon>
        <taxon>Leptospira</taxon>
    </lineage>
</organism>
<protein>
    <recommendedName>
        <fullName evidence="1">ATP-dependent Clp protease adapter protein ClpS</fullName>
    </recommendedName>
</protein>
<reference key="1">
    <citation type="journal article" date="2008" name="PLoS ONE">
        <title>Genome sequence of the saprophyte Leptospira biflexa provides insights into the evolution of Leptospira and the pathogenesis of leptospirosis.</title>
        <authorList>
            <person name="Picardeau M."/>
            <person name="Bulach D.M."/>
            <person name="Bouchier C."/>
            <person name="Zuerner R.L."/>
            <person name="Zidane N."/>
            <person name="Wilson P.J."/>
            <person name="Creno S."/>
            <person name="Kuczek E.S."/>
            <person name="Bommezzadri S."/>
            <person name="Davis J.C."/>
            <person name="McGrath A."/>
            <person name="Johnson M.J."/>
            <person name="Boursaux-Eude C."/>
            <person name="Seemann T."/>
            <person name="Rouy Z."/>
            <person name="Coppel R.L."/>
            <person name="Rood J.I."/>
            <person name="Lajus A."/>
            <person name="Davies J.K."/>
            <person name="Medigue C."/>
            <person name="Adler B."/>
        </authorList>
    </citation>
    <scope>NUCLEOTIDE SEQUENCE [LARGE SCALE GENOMIC DNA]</scope>
    <source>
        <strain>Patoc 1 / Ames</strain>
    </source>
</reference>
<feature type="chain" id="PRO_1000115461" description="ATP-dependent Clp protease adapter protein ClpS">
    <location>
        <begin position="1"/>
        <end position="113"/>
    </location>
</feature>
<proteinExistence type="inferred from homology"/>
<dbReference type="EMBL" id="CP000777">
    <property type="protein sequence ID" value="ABZ94306.1"/>
    <property type="molecule type" value="Genomic_DNA"/>
</dbReference>
<dbReference type="RefSeq" id="WP_012388836.1">
    <property type="nucleotide sequence ID" value="NC_010842.1"/>
</dbReference>
<dbReference type="SMR" id="B0S9H9"/>
<dbReference type="KEGG" id="lbf:LBF_1799"/>
<dbReference type="HOGENOM" id="CLU_134358_3_0_12"/>
<dbReference type="GO" id="GO:0030163">
    <property type="term" value="P:protein catabolic process"/>
    <property type="evidence" value="ECO:0007669"/>
    <property type="project" value="InterPro"/>
</dbReference>
<dbReference type="GO" id="GO:0006508">
    <property type="term" value="P:proteolysis"/>
    <property type="evidence" value="ECO:0007669"/>
    <property type="project" value="UniProtKB-UniRule"/>
</dbReference>
<dbReference type="FunFam" id="3.30.1390.10:FF:000002">
    <property type="entry name" value="ATP-dependent Clp protease adapter protein ClpS"/>
    <property type="match status" value="1"/>
</dbReference>
<dbReference type="Gene3D" id="3.30.1390.10">
    <property type="match status" value="1"/>
</dbReference>
<dbReference type="HAMAP" id="MF_00302">
    <property type="entry name" value="ClpS"/>
    <property type="match status" value="1"/>
</dbReference>
<dbReference type="InterPro" id="IPR022935">
    <property type="entry name" value="ClpS"/>
</dbReference>
<dbReference type="InterPro" id="IPR003769">
    <property type="entry name" value="ClpS_core"/>
</dbReference>
<dbReference type="InterPro" id="IPR014719">
    <property type="entry name" value="Ribosomal_bL12_C/ClpS-like"/>
</dbReference>
<dbReference type="NCBIfam" id="NF000672">
    <property type="entry name" value="PRK00033.1-5"/>
    <property type="match status" value="1"/>
</dbReference>
<dbReference type="PANTHER" id="PTHR33473:SF19">
    <property type="entry name" value="ATP-DEPENDENT CLP PROTEASE ADAPTER PROTEIN CLPS"/>
    <property type="match status" value="1"/>
</dbReference>
<dbReference type="PANTHER" id="PTHR33473">
    <property type="entry name" value="ATP-DEPENDENT CLP PROTEASE ADAPTER PROTEIN CLPS1, CHLOROPLASTIC"/>
    <property type="match status" value="1"/>
</dbReference>
<dbReference type="Pfam" id="PF02617">
    <property type="entry name" value="ClpS"/>
    <property type="match status" value="1"/>
</dbReference>
<dbReference type="SUPFAM" id="SSF54736">
    <property type="entry name" value="ClpS-like"/>
    <property type="match status" value="1"/>
</dbReference>
<comment type="function">
    <text evidence="1">Involved in the modulation of the specificity of the ClpAP-mediated ATP-dependent protein degradation.</text>
</comment>
<comment type="subunit">
    <text evidence="1">Binds to the N-terminal domain of the chaperone ClpA.</text>
</comment>
<comment type="similarity">
    <text evidence="1">Belongs to the ClpS family.</text>
</comment>
<gene>
    <name evidence="1" type="primary">clpS</name>
    <name type="ordered locus">LBF_1799</name>
</gene>